<evidence type="ECO:0000255" key="1">
    <source>
        <dbReference type="HAMAP-Rule" id="MF_00137"/>
    </source>
</evidence>
<dbReference type="EC" id="6.3.2.6" evidence="1"/>
<dbReference type="EMBL" id="CP000931">
    <property type="protein sequence ID" value="ABZ76381.1"/>
    <property type="molecule type" value="Genomic_DNA"/>
</dbReference>
<dbReference type="RefSeq" id="WP_012276913.1">
    <property type="nucleotide sequence ID" value="NC_010334.1"/>
</dbReference>
<dbReference type="SMR" id="B0TQY6"/>
<dbReference type="STRING" id="458817.Shal_1816"/>
<dbReference type="KEGG" id="shl:Shal_1816"/>
<dbReference type="eggNOG" id="COG0152">
    <property type="taxonomic scope" value="Bacteria"/>
</dbReference>
<dbReference type="HOGENOM" id="CLU_064197_0_0_6"/>
<dbReference type="OrthoDB" id="9801549at2"/>
<dbReference type="UniPathway" id="UPA00074">
    <property type="reaction ID" value="UER00131"/>
</dbReference>
<dbReference type="Proteomes" id="UP000001317">
    <property type="component" value="Chromosome"/>
</dbReference>
<dbReference type="GO" id="GO:0005737">
    <property type="term" value="C:cytoplasm"/>
    <property type="evidence" value="ECO:0007669"/>
    <property type="project" value="TreeGrafter"/>
</dbReference>
<dbReference type="GO" id="GO:0005524">
    <property type="term" value="F:ATP binding"/>
    <property type="evidence" value="ECO:0007669"/>
    <property type="project" value="UniProtKB-KW"/>
</dbReference>
<dbReference type="GO" id="GO:0004639">
    <property type="term" value="F:phosphoribosylaminoimidazolesuccinocarboxamide synthase activity"/>
    <property type="evidence" value="ECO:0007669"/>
    <property type="project" value="UniProtKB-UniRule"/>
</dbReference>
<dbReference type="GO" id="GO:0006189">
    <property type="term" value="P:'de novo' IMP biosynthetic process"/>
    <property type="evidence" value="ECO:0007669"/>
    <property type="project" value="UniProtKB-UniRule"/>
</dbReference>
<dbReference type="CDD" id="cd01414">
    <property type="entry name" value="SAICAR_synt_Sc"/>
    <property type="match status" value="1"/>
</dbReference>
<dbReference type="Gene3D" id="3.30.470.20">
    <property type="entry name" value="ATP-grasp fold, B domain"/>
    <property type="match status" value="1"/>
</dbReference>
<dbReference type="Gene3D" id="3.30.200.20">
    <property type="entry name" value="Phosphorylase Kinase, domain 1"/>
    <property type="match status" value="1"/>
</dbReference>
<dbReference type="HAMAP" id="MF_00137">
    <property type="entry name" value="SAICAR_synth"/>
    <property type="match status" value="1"/>
</dbReference>
<dbReference type="InterPro" id="IPR028923">
    <property type="entry name" value="SAICAR_synt/ADE2_N"/>
</dbReference>
<dbReference type="InterPro" id="IPR014106">
    <property type="entry name" value="SAICAR_synthase_Vibrio-typ"/>
</dbReference>
<dbReference type="NCBIfam" id="NF010567">
    <property type="entry name" value="PRK13960.1"/>
    <property type="match status" value="1"/>
</dbReference>
<dbReference type="NCBIfam" id="TIGR02735">
    <property type="entry name" value="purC_vibrio"/>
    <property type="match status" value="1"/>
</dbReference>
<dbReference type="PANTHER" id="PTHR43700">
    <property type="entry name" value="PHOSPHORIBOSYLAMINOIMIDAZOLE-SUCCINOCARBOXAMIDE SYNTHASE"/>
    <property type="match status" value="1"/>
</dbReference>
<dbReference type="PANTHER" id="PTHR43700:SF1">
    <property type="entry name" value="PHOSPHORIBOSYLAMINOIMIDAZOLE-SUCCINOCARBOXAMIDE SYNTHASE"/>
    <property type="match status" value="1"/>
</dbReference>
<dbReference type="Pfam" id="PF01259">
    <property type="entry name" value="SAICAR_synt"/>
    <property type="match status" value="1"/>
</dbReference>
<dbReference type="SUPFAM" id="SSF56104">
    <property type="entry name" value="SAICAR synthase-like"/>
    <property type="match status" value="1"/>
</dbReference>
<sequence length="367" mass="41400">MNLADKVLVVNDNLPIRTNKPVHSGKVRSVYWLTEEDSARLIKDKGYDVPADAPLAIMVISDRISAFDCVWQGENGLNGVPGKGTALNAISNHWFKLFKDKGLADSHILDIPHPLVWIVQKARPVMIEAIARQYITGSMWRSYTKGEREFCGITIPEGLEKDQKLPELLITPSTKGVLTGLEGVPEADDVNVSRSDIERHVEGFNFTKLADIDLYEKLLKEGFDVISDALAEHDQVFVDTKFEFGYVNDAAGNEKLIYMDEVGTPDSSRIWDGSSHRDGKIIEQSKEGFRQWLLNHFPDSDILLNKNRMEERFALARDNKLPESVMMDISNTYVGIAEKVIGSKLKISENPKQEIIDILREEYQLIV</sequence>
<comment type="catalytic activity">
    <reaction evidence="1">
        <text>5-amino-1-(5-phospho-D-ribosyl)imidazole-4-carboxylate + L-aspartate + ATP = (2S)-2-[5-amino-1-(5-phospho-beta-D-ribosyl)imidazole-4-carboxamido]succinate + ADP + phosphate + 2 H(+)</text>
        <dbReference type="Rhea" id="RHEA:22628"/>
        <dbReference type="ChEBI" id="CHEBI:15378"/>
        <dbReference type="ChEBI" id="CHEBI:29991"/>
        <dbReference type="ChEBI" id="CHEBI:30616"/>
        <dbReference type="ChEBI" id="CHEBI:43474"/>
        <dbReference type="ChEBI" id="CHEBI:58443"/>
        <dbReference type="ChEBI" id="CHEBI:77657"/>
        <dbReference type="ChEBI" id="CHEBI:456216"/>
        <dbReference type="EC" id="6.3.2.6"/>
    </reaction>
</comment>
<comment type="pathway">
    <text evidence="1">Purine metabolism; IMP biosynthesis via de novo pathway; 5-amino-1-(5-phospho-D-ribosyl)imidazole-4-carboxamide from 5-amino-1-(5-phospho-D-ribosyl)imidazole-4-carboxylate: step 1/2.</text>
</comment>
<comment type="similarity">
    <text evidence="1">Belongs to the SAICAR synthetase family.</text>
</comment>
<protein>
    <recommendedName>
        <fullName evidence="1">Phosphoribosylaminoimidazole-succinocarboxamide synthase</fullName>
        <ecNumber evidence="1">6.3.2.6</ecNumber>
    </recommendedName>
    <alternativeName>
        <fullName evidence="1">SAICAR synthetase</fullName>
    </alternativeName>
</protein>
<keyword id="KW-0067">ATP-binding</keyword>
<keyword id="KW-0436">Ligase</keyword>
<keyword id="KW-0547">Nucleotide-binding</keyword>
<keyword id="KW-0658">Purine biosynthesis</keyword>
<name>PUR7_SHEHH</name>
<reference key="1">
    <citation type="submission" date="2008-01" db="EMBL/GenBank/DDBJ databases">
        <title>Complete sequence of Shewanella halifaxensis HAW-EB4.</title>
        <authorList>
            <consortium name="US DOE Joint Genome Institute"/>
            <person name="Copeland A."/>
            <person name="Lucas S."/>
            <person name="Lapidus A."/>
            <person name="Glavina del Rio T."/>
            <person name="Dalin E."/>
            <person name="Tice H."/>
            <person name="Bruce D."/>
            <person name="Goodwin L."/>
            <person name="Pitluck S."/>
            <person name="Sims D."/>
            <person name="Brettin T."/>
            <person name="Detter J.C."/>
            <person name="Han C."/>
            <person name="Kuske C.R."/>
            <person name="Schmutz J."/>
            <person name="Larimer F."/>
            <person name="Land M."/>
            <person name="Hauser L."/>
            <person name="Kyrpides N."/>
            <person name="Kim E."/>
            <person name="Zhao J.-S."/>
            <person name="Richardson P."/>
        </authorList>
    </citation>
    <scope>NUCLEOTIDE SEQUENCE [LARGE SCALE GENOMIC DNA]</scope>
    <source>
        <strain>HAW-EB4</strain>
    </source>
</reference>
<proteinExistence type="inferred from homology"/>
<feature type="chain" id="PRO_1000117849" description="Phosphoribosylaminoimidazole-succinocarboxamide synthase">
    <location>
        <begin position="1"/>
        <end position="367"/>
    </location>
</feature>
<gene>
    <name evidence="1" type="primary">purC</name>
    <name type="ordered locus">Shal_1816</name>
</gene>
<organism>
    <name type="scientific">Shewanella halifaxensis (strain HAW-EB4)</name>
    <dbReference type="NCBI Taxonomy" id="458817"/>
    <lineage>
        <taxon>Bacteria</taxon>
        <taxon>Pseudomonadati</taxon>
        <taxon>Pseudomonadota</taxon>
        <taxon>Gammaproteobacteria</taxon>
        <taxon>Alteromonadales</taxon>
        <taxon>Shewanellaceae</taxon>
        <taxon>Shewanella</taxon>
    </lineage>
</organism>
<accession>B0TQY6</accession>